<accession>P04931</accession>
<reference key="1">
    <citation type="journal article" date="1986" name="Nucleic Acids Res.">
        <title>An asparagine-rich protein from blood stages of Plasmodium falciparum shares determinants with sporozoites.</title>
        <authorList>
            <person name="Stahl H.-D."/>
            <person name="Bianco A.E."/>
            <person name="Crewther P.E."/>
            <person name="Burkot T."/>
            <person name="Coppel R.L."/>
            <person name="Brown G.V."/>
            <person name="Anders R.F."/>
            <person name="Kemp D.J."/>
        </authorList>
    </citation>
    <scope>NUCLEOTIDE SEQUENCE [MRNA]</scope>
</reference>
<feature type="chain" id="PRO_0000217180" description="Asparagine-rich protein">
    <location>
        <begin position="1" status="less than"/>
        <end position="537" status="greater than"/>
    </location>
</feature>
<feature type="region of interest" description="Disordered" evidence="1">
    <location>
        <begin position="1"/>
        <end position="22"/>
    </location>
</feature>
<feature type="region of interest" description="Disordered" evidence="1">
    <location>
        <begin position="187"/>
        <end position="254"/>
    </location>
</feature>
<feature type="region of interest" description="Disordered" evidence="1">
    <location>
        <begin position="336"/>
        <end position="372"/>
    </location>
</feature>
<feature type="region of interest" description="Disordered" evidence="1">
    <location>
        <begin position="399"/>
        <end position="479"/>
    </location>
</feature>
<feature type="region of interest" description="Disordered" evidence="1">
    <location>
        <begin position="509"/>
        <end position="528"/>
    </location>
</feature>
<feature type="compositionally biased region" description="Low complexity" evidence="1">
    <location>
        <begin position="336"/>
        <end position="347"/>
    </location>
</feature>
<feature type="compositionally biased region" description="Low complexity" evidence="1">
    <location>
        <begin position="399"/>
        <end position="469"/>
    </location>
</feature>
<feature type="compositionally biased region" description="Acidic residues" evidence="1">
    <location>
        <begin position="470"/>
        <end position="479"/>
    </location>
</feature>
<feature type="compositionally biased region" description="Basic and acidic residues" evidence="1">
    <location>
        <begin position="509"/>
        <end position="518"/>
    </location>
</feature>
<feature type="non-terminal residue">
    <location>
        <position position="1"/>
    </location>
</feature>
<feature type="non-terminal residue">
    <location>
        <position position="537"/>
    </location>
</feature>
<evidence type="ECO:0000256" key="1">
    <source>
        <dbReference type="SAM" id="MobiDB-lite"/>
    </source>
</evidence>
<proteinExistence type="evidence at transcript level"/>
<keyword id="KW-0461">Malaria</keyword>
<protein>
    <recommendedName>
        <fullName>Asparagine-rich protein</fullName>
        <shortName>ARP</shortName>
    </recommendedName>
    <alternativeName>
        <fullName>Ag319</fullName>
    </alternativeName>
</protein>
<sequence length="537" mass="63000">YNNNNKNNNNNDDGNINYQNTNEFKDNKKNMNFKNQYNNNYKFDENMNNSNTMHSRNSNVEEHLRNNSIDMNNSNINNYTNQQTRFSSFMENENENENKNYHTGGMNNNIHFKNKYDNNNSSMKNTDNNKTDTSYNMKGTINNDNNNMDYLRNINNINEYKGSAKNKFYTNYMNKNNLKFTQNNNDNMNINEDNNNNNNNNNNNNGVFSNYQNNNMNRNNSINIKRNLNNNNNINNNMNKMGSQDKNQNSNNNFYMNYNYQNRKNSMNNNMNNNMNNNMNHNMNNNMNHNMNNNMNHNMNNNMNHNMNNNMNNINSLDSDMSPNYHAHVKMSMMNYNNNESNTANPNQMNFEQTNNDNMKRENNNMNNYGYDDNTVHVNNNTPSTDFFSRAVGYNNNYLNNNNNMNSAVNNNSSNGNNMKNENSENKNVADNNDSLNNNKNNNNNINMNESINNNNTLNNNNEYNNQNNNEDEDDDDWGELGEDKYIDINSIMKKKNVILNQLEADLNDLSKKGNDGKNKKKNKMKKDDLFVLPHTN</sequence>
<name>ARP_PLAFA</name>
<organism>
    <name type="scientific">Plasmodium falciparum</name>
    <dbReference type="NCBI Taxonomy" id="5833"/>
    <lineage>
        <taxon>Eukaryota</taxon>
        <taxon>Sar</taxon>
        <taxon>Alveolata</taxon>
        <taxon>Apicomplexa</taxon>
        <taxon>Aconoidasida</taxon>
        <taxon>Haemosporida</taxon>
        <taxon>Plasmodiidae</taxon>
        <taxon>Plasmodium</taxon>
        <taxon>Plasmodium (Laverania)</taxon>
    </lineage>
</organism>
<dbReference type="EMBL" id="M24328">
    <property type="protein sequence ID" value="AAA29491.1"/>
    <property type="molecule type" value="mRNA"/>
</dbReference>
<dbReference type="PIR" id="A23770">
    <property type="entry name" value="A23770"/>
</dbReference>
<dbReference type="EnsemblProtists" id="CAX64289">
    <property type="protein sequence ID" value="CAX64289"/>
    <property type="gene ID" value="PF3D7_1312900"/>
</dbReference>
<dbReference type="VEuPathDB" id="PlasmoDB:PF3D7_1312900"/>
<dbReference type="VEuPathDB" id="PlasmoDB:Pf7G8-2_000416200"/>
<dbReference type="VEuPathDB" id="PlasmoDB:Pf7G8_130017400"/>
<dbReference type="VEuPathDB" id="PlasmoDB:PfCD01_130018500"/>
<dbReference type="VEuPathDB" id="PlasmoDB:PfDd2_130018800"/>
<dbReference type="VEuPathDB" id="PlasmoDB:PfGA01_130019000"/>
<dbReference type="VEuPathDB" id="PlasmoDB:PfGB4_130018900"/>
<dbReference type="VEuPathDB" id="PlasmoDB:PfGN01_130019700"/>
<dbReference type="VEuPathDB" id="PlasmoDB:PfHB3_130019300"/>
<dbReference type="VEuPathDB" id="PlasmoDB:PfIT_130018200"/>
<dbReference type="VEuPathDB" id="PlasmoDB:PfKE01_130018600"/>
<dbReference type="VEuPathDB" id="PlasmoDB:PfKH01_130017200"/>
<dbReference type="VEuPathDB" id="PlasmoDB:PfKH02_130015900"/>
<dbReference type="VEuPathDB" id="PlasmoDB:PfML01_130016200"/>
<dbReference type="VEuPathDB" id="PlasmoDB:PfNF135_130018000"/>
<dbReference type="VEuPathDB" id="PlasmoDB:PfNF166_130018600"/>
<dbReference type="VEuPathDB" id="PlasmoDB:PfNF54_130018300"/>
<dbReference type="VEuPathDB" id="PlasmoDB:PfSD01_130019700"/>
<dbReference type="VEuPathDB" id="PlasmoDB:PfSN01_130016000"/>
<dbReference type="VEuPathDB" id="PlasmoDB:PfTG01_130018700"/>